<keyword id="KW-0238">DNA-binding</keyword>
<keyword id="KW-0539">Nucleus</keyword>
<keyword id="KW-1185">Reference proteome</keyword>
<keyword id="KW-0804">Transcription</keyword>
<keyword id="KW-0805">Transcription regulation</keyword>
<keyword id="KW-0843">Virulence</keyword>
<gene>
    <name evidence="4" type="primary">MIG1</name>
    <name type="ORF">MGG_01204</name>
</gene>
<name>MIG1_PYRO7</name>
<sequence>MGRRKIEIKAIKDDRNRSVTFLKRKGGLFKKAHELSVLCSVDVAVFIFGTNKKLYEYSSGDMRELITRYTYHGGATEHKGPSDFNGGDDDDEEEGDGTPPLDQPMDAHMMPPHFQGQGPFPPHVMRHYTPSASPPIPNGVPFPPHGHGVPRGHTPQPQMLSRPGSRNDARRMGQPMGPQGSPQVNGFGFGQQQSMYGPPNTTMPPHMPPQMAPGPPFPYPQHPQHPPHPPHPPHPPHPQQPHQPQMQQQFIEDGRRATMPANFAPHPPPPHGPMGMQRHSVSPPQQHPHHVPQLPPQQPQQHPHSSPPQPQHHQMQSPPQPMVKFESPQQIEPPQHQHQQQPEPQEPRPEQQQQQQQSQQSQQPQEPQSEPARSLPPPPPPLEVKTELAPPAQPGRIPQPSLLDTAVKKLPRQKQHSIFTPIDENRSILSQNLAAFHAEPSKNKSSPPAHHRSSSVDESTSNASEASRGKDKDIASSPPLLKRADPRASISSVSSAPESAPAPPSRSNSLRAGPPRPRLKVQIPDEQSEDGSGSATAESASSAQGGASTDATSQSTRQNDSHSSTNMVLPPPSPSASALLSAGATGPPNPFAPKRPPQHPAPGLNIDTPVSALPSRFLNNEFLPSPSSFYPDWNFRGGDNNTLPSPLNFATPVVGTGPSFLRDENPGASLKRKSPDNLSIHGPISDNPLEAGNEPKRVKVDS</sequence>
<accession>G4MWZ7</accession>
<dbReference type="EMBL" id="CM001232">
    <property type="protein sequence ID" value="EHA54289.1"/>
    <property type="molecule type" value="Genomic_DNA"/>
</dbReference>
<dbReference type="RefSeq" id="XP_003714096.1">
    <property type="nucleotide sequence ID" value="XM_003714048.1"/>
</dbReference>
<dbReference type="SMR" id="G4MWZ7"/>
<dbReference type="STRING" id="242507.G4MWZ7"/>
<dbReference type="EnsemblFungi" id="MGG_01204T0">
    <property type="protein sequence ID" value="MGG_01204T0"/>
    <property type="gene ID" value="MGG_01204"/>
</dbReference>
<dbReference type="GeneID" id="2679760"/>
<dbReference type="KEGG" id="mgr:MGG_01204"/>
<dbReference type="VEuPathDB" id="FungiDB:MGG_01204"/>
<dbReference type="eggNOG" id="KOG0014">
    <property type="taxonomic scope" value="Eukaryota"/>
</dbReference>
<dbReference type="HOGENOM" id="CLU_024080_1_0_1"/>
<dbReference type="InParanoid" id="G4MWZ7"/>
<dbReference type="OMA" id="LGRYQYF"/>
<dbReference type="OrthoDB" id="1898716at2759"/>
<dbReference type="Proteomes" id="UP000009058">
    <property type="component" value="Chromosome 2"/>
</dbReference>
<dbReference type="GO" id="GO:0005634">
    <property type="term" value="C:nucleus"/>
    <property type="evidence" value="ECO:0007669"/>
    <property type="project" value="UniProtKB-SubCell"/>
</dbReference>
<dbReference type="GO" id="GO:0046983">
    <property type="term" value="F:protein dimerization activity"/>
    <property type="evidence" value="ECO:0007669"/>
    <property type="project" value="InterPro"/>
</dbReference>
<dbReference type="GO" id="GO:0000977">
    <property type="term" value="F:RNA polymerase II transcription regulatory region sequence-specific DNA binding"/>
    <property type="evidence" value="ECO:0007669"/>
    <property type="project" value="InterPro"/>
</dbReference>
<dbReference type="GO" id="GO:0045944">
    <property type="term" value="P:positive regulation of transcription by RNA polymerase II"/>
    <property type="evidence" value="ECO:0007669"/>
    <property type="project" value="InterPro"/>
</dbReference>
<dbReference type="CDD" id="cd00265">
    <property type="entry name" value="MADS_MEF2_like"/>
    <property type="match status" value="1"/>
</dbReference>
<dbReference type="FunFam" id="3.40.1810.10:FF:000013">
    <property type="entry name" value="Transcription factor, MADS-box"/>
    <property type="match status" value="1"/>
</dbReference>
<dbReference type="Gene3D" id="3.40.1810.10">
    <property type="entry name" value="Transcription factor, MADS-box"/>
    <property type="match status" value="1"/>
</dbReference>
<dbReference type="InterPro" id="IPR050142">
    <property type="entry name" value="MADS-box/MEF2_TF"/>
</dbReference>
<dbReference type="InterPro" id="IPR033896">
    <property type="entry name" value="MEF2-like_N"/>
</dbReference>
<dbReference type="InterPro" id="IPR002100">
    <property type="entry name" value="TF_MADSbox"/>
</dbReference>
<dbReference type="InterPro" id="IPR036879">
    <property type="entry name" value="TF_MADSbox_sf"/>
</dbReference>
<dbReference type="PANTHER" id="PTHR48019">
    <property type="entry name" value="SERUM RESPONSE FACTOR HOMOLOG"/>
    <property type="match status" value="1"/>
</dbReference>
<dbReference type="Pfam" id="PF00319">
    <property type="entry name" value="SRF-TF"/>
    <property type="match status" value="1"/>
</dbReference>
<dbReference type="PRINTS" id="PR00404">
    <property type="entry name" value="MADSDOMAIN"/>
</dbReference>
<dbReference type="SMART" id="SM00432">
    <property type="entry name" value="MADS"/>
    <property type="match status" value="1"/>
</dbReference>
<dbReference type="SUPFAM" id="SSF55455">
    <property type="entry name" value="SRF-like"/>
    <property type="match status" value="1"/>
</dbReference>
<dbReference type="PROSITE" id="PS50066">
    <property type="entry name" value="MADS_BOX_2"/>
    <property type="match status" value="1"/>
</dbReference>
<proteinExistence type="evidence at protein level"/>
<organism>
    <name type="scientific">Pyricularia oryzae (strain 70-15 / ATCC MYA-4617 / FGSC 8958)</name>
    <name type="common">Rice blast fungus</name>
    <name type="synonym">Magnaporthe oryzae</name>
    <dbReference type="NCBI Taxonomy" id="242507"/>
    <lineage>
        <taxon>Eukaryota</taxon>
        <taxon>Fungi</taxon>
        <taxon>Dikarya</taxon>
        <taxon>Ascomycota</taxon>
        <taxon>Pezizomycotina</taxon>
        <taxon>Sordariomycetes</taxon>
        <taxon>Sordariomycetidae</taxon>
        <taxon>Magnaporthales</taxon>
        <taxon>Pyriculariaceae</taxon>
        <taxon>Pyricularia</taxon>
    </lineage>
</organism>
<protein>
    <recommendedName>
        <fullName evidence="4">MADS-box MEF2 type transcription factor MIG1</fullName>
    </recommendedName>
</protein>
<evidence type="ECO:0000255" key="1">
    <source>
        <dbReference type="PROSITE-ProRule" id="PRU00251"/>
    </source>
</evidence>
<evidence type="ECO:0000256" key="2">
    <source>
        <dbReference type="SAM" id="MobiDB-lite"/>
    </source>
</evidence>
<evidence type="ECO:0000269" key="3">
    <source>
    </source>
</evidence>
<evidence type="ECO:0000303" key="4">
    <source>
    </source>
</evidence>
<evidence type="ECO:0000305" key="5"/>
<comment type="function">
    <text evidence="3">Transcription factor acting downstream of the MPS1 MAP kinase (MAPK) cascade during conidiation and plant infection (PubMed:18344407). Required for overcoming plant defense responses and the differentiation of secondary infectious hyphae in live plant cells (PubMed:18344407).</text>
</comment>
<comment type="subunit">
    <text evidence="3">Interacts with MAPK MPS1.</text>
</comment>
<comment type="subcellular location">
    <subcellularLocation>
        <location evidence="3">Nucleus</location>
    </subcellularLocation>
</comment>
<comment type="induction">
    <text evidence="3">Expressed in conidia but not in aerial hyphae or conidiophores.</text>
</comment>
<comment type="domain">
    <text evidence="3">The MADS-box domain is essential for the function but dispensable for nuclear localization.</text>
</comment>
<comment type="disruption phenotype">
    <text evidence="3">Leads to reduced aerial hyphal growth and conidiation (PubMed:18344407). Does not affect appressorium formation but impairs infectious growth (PubMed:18344407).</text>
</comment>
<comment type="similarity">
    <text evidence="5">Belongs to the MEF2 family.</text>
</comment>
<feature type="chain" id="PRO_0000453102" description="MADS-box MEF2 type transcription factor MIG1">
    <location>
        <begin position="1"/>
        <end position="702"/>
    </location>
</feature>
<feature type="domain" description="MADS-box" evidence="1">
    <location>
        <begin position="1"/>
        <end position="61"/>
    </location>
</feature>
<feature type="region of interest" description="Disordered" evidence="2">
    <location>
        <begin position="73"/>
        <end position="608"/>
    </location>
</feature>
<feature type="region of interest" description="Disordered" evidence="2">
    <location>
        <begin position="658"/>
        <end position="702"/>
    </location>
</feature>
<feature type="compositionally biased region" description="Acidic residues" evidence="2">
    <location>
        <begin position="86"/>
        <end position="96"/>
    </location>
</feature>
<feature type="compositionally biased region" description="Pro residues" evidence="2">
    <location>
        <begin position="132"/>
        <end position="144"/>
    </location>
</feature>
<feature type="compositionally biased region" description="Low complexity" evidence="2">
    <location>
        <begin position="145"/>
        <end position="155"/>
    </location>
</feature>
<feature type="compositionally biased region" description="Polar residues" evidence="2">
    <location>
        <begin position="180"/>
        <end position="195"/>
    </location>
</feature>
<feature type="compositionally biased region" description="Pro residues" evidence="2">
    <location>
        <begin position="201"/>
        <end position="241"/>
    </location>
</feature>
<feature type="compositionally biased region" description="Low complexity" evidence="2">
    <location>
        <begin position="273"/>
        <end position="284"/>
    </location>
</feature>
<feature type="compositionally biased region" description="Low complexity" evidence="2">
    <location>
        <begin position="326"/>
        <end position="343"/>
    </location>
</feature>
<feature type="compositionally biased region" description="Low complexity" evidence="2">
    <location>
        <begin position="350"/>
        <end position="371"/>
    </location>
</feature>
<feature type="compositionally biased region" description="Polar residues" evidence="2">
    <location>
        <begin position="456"/>
        <end position="465"/>
    </location>
</feature>
<feature type="compositionally biased region" description="Low complexity" evidence="2">
    <location>
        <begin position="487"/>
        <end position="512"/>
    </location>
</feature>
<feature type="compositionally biased region" description="Low complexity" evidence="2">
    <location>
        <begin position="530"/>
        <end position="553"/>
    </location>
</feature>
<feature type="compositionally biased region" description="Polar residues" evidence="2">
    <location>
        <begin position="554"/>
        <end position="567"/>
    </location>
</feature>
<feature type="compositionally biased region" description="Pro residues" evidence="2">
    <location>
        <begin position="587"/>
        <end position="600"/>
    </location>
</feature>
<feature type="compositionally biased region" description="Basic and acidic residues" evidence="2">
    <location>
        <begin position="693"/>
        <end position="702"/>
    </location>
</feature>
<reference key="1">
    <citation type="journal article" date="2005" name="Nature">
        <title>The genome sequence of the rice blast fungus Magnaporthe grisea.</title>
        <authorList>
            <person name="Dean R.A."/>
            <person name="Talbot N.J."/>
            <person name="Ebbole D.J."/>
            <person name="Farman M.L."/>
            <person name="Mitchell T.K."/>
            <person name="Orbach M.J."/>
            <person name="Thon M.R."/>
            <person name="Kulkarni R."/>
            <person name="Xu J.-R."/>
            <person name="Pan H."/>
            <person name="Read N.D."/>
            <person name="Lee Y.-H."/>
            <person name="Carbone I."/>
            <person name="Brown D."/>
            <person name="Oh Y.Y."/>
            <person name="Donofrio N."/>
            <person name="Jeong J.S."/>
            <person name="Soanes D.M."/>
            <person name="Djonovic S."/>
            <person name="Kolomiets E."/>
            <person name="Rehmeyer C."/>
            <person name="Li W."/>
            <person name="Harding M."/>
            <person name="Kim S."/>
            <person name="Lebrun M.-H."/>
            <person name="Bohnert H."/>
            <person name="Coughlan S."/>
            <person name="Butler J."/>
            <person name="Calvo S.E."/>
            <person name="Ma L.-J."/>
            <person name="Nicol R."/>
            <person name="Purcell S."/>
            <person name="Nusbaum C."/>
            <person name="Galagan J.E."/>
            <person name="Birren B.W."/>
        </authorList>
    </citation>
    <scope>NUCLEOTIDE SEQUENCE [LARGE SCALE GENOMIC DNA]</scope>
    <source>
        <strain>70-15 / ATCC MYA-4617 / FGSC 8958</strain>
    </source>
</reference>
<reference key="2">
    <citation type="journal article" date="2008" name="Eukaryot. Cell">
        <title>MADS-box transcription factor mig1 is required for infectious growth in Magnaporthe grisea.</title>
        <authorList>
            <person name="Mehrabi R."/>
            <person name="Ding S."/>
            <person name="Xu J.R."/>
        </authorList>
    </citation>
    <scope>FUNCTION</scope>
    <scope>DISRUPTION PHENOTYPE</scope>
    <scope>SUBCELLULAR LOCATION</scope>
    <scope>DOMAIN</scope>
    <scope>INTERACTION WITH MPS</scope>
    <scope>INDUCTION</scope>
</reference>